<proteinExistence type="inferred from homology"/>
<comment type="function">
    <text evidence="1">Secreted metalloproteinase that allows assimilation of proteinaceous substrates. Shows high activities on basic nuclear substrates such as histone and protamine. May be involved in virulence (By similarity).</text>
</comment>
<comment type="catalytic activity">
    <reaction>
        <text>Preferential cleavage of bonds with hydrophobic residues in P1'. Also 3-Asn-|-Gln-4 and 8-Gly-|-Ser-9 bonds in insulin B chain.</text>
        <dbReference type="EC" id="3.4.24.39"/>
    </reaction>
</comment>
<comment type="cofactor">
    <cofactor evidence="1">
        <name>Zn(2+)</name>
        <dbReference type="ChEBI" id="CHEBI:29105"/>
    </cofactor>
    <text evidence="1">Binds 1 zinc ion per subunit.</text>
</comment>
<comment type="subcellular location">
    <subcellularLocation>
        <location evidence="1">Secreted</location>
    </subcellularLocation>
</comment>
<comment type="similarity">
    <text evidence="3">Belongs to the peptidase M35 family.</text>
</comment>
<comment type="sequence caution" evidence="3">
    <conflict type="erroneous gene model prediction">
        <sequence resource="EMBL-CDS" id="AAY45755"/>
    </conflict>
</comment>
<comment type="sequence caution" evidence="3">
    <conflict type="erroneous gene model prediction">
        <sequence resource="EMBL-CDS" id="EER29762"/>
    </conflict>
</comment>
<feature type="signal peptide" evidence="2">
    <location>
        <begin position="1"/>
        <end position="19"/>
    </location>
</feature>
<feature type="propeptide" id="PRO_0000407072" evidence="1">
    <location>
        <begin position="20"/>
        <end position="179"/>
    </location>
</feature>
<feature type="chain" id="PRO_0000407073" description="Neutral protease 2 homolog MEP5">
    <location>
        <begin position="180"/>
        <end position="356"/>
    </location>
</feature>
<feature type="active site" evidence="1">
    <location>
        <position position="309"/>
    </location>
</feature>
<feature type="binding site" evidence="1">
    <location>
        <position position="308"/>
    </location>
    <ligand>
        <name>Zn(2+)</name>
        <dbReference type="ChEBI" id="CHEBI:29105"/>
        <note>catalytic</note>
    </ligand>
</feature>
<feature type="binding site" evidence="1">
    <location>
        <position position="312"/>
    </location>
    <ligand>
        <name>Zn(2+)</name>
        <dbReference type="ChEBI" id="CHEBI:29105"/>
        <note>catalytic</note>
    </ligand>
</feature>
<feature type="binding site" evidence="1">
    <location>
        <position position="323"/>
    </location>
    <ligand>
        <name>Zn(2+)</name>
        <dbReference type="ChEBI" id="CHEBI:29105"/>
        <note>catalytic</note>
    </ligand>
</feature>
<feature type="disulfide bond" evidence="1">
    <location>
        <begin position="187"/>
        <end position="259"/>
    </location>
</feature>
<feature type="disulfide bond" evidence="1">
    <location>
        <begin position="266"/>
        <end position="284"/>
    </location>
</feature>
<keyword id="KW-0165">Cleavage on pair of basic residues</keyword>
<keyword id="KW-1015">Disulfide bond</keyword>
<keyword id="KW-0378">Hydrolase</keyword>
<keyword id="KW-0479">Metal-binding</keyword>
<keyword id="KW-0482">Metalloprotease</keyword>
<keyword id="KW-0645">Protease</keyword>
<keyword id="KW-0964">Secreted</keyword>
<keyword id="KW-0732">Signal</keyword>
<keyword id="KW-0843">Virulence</keyword>
<keyword id="KW-0862">Zinc</keyword>
<keyword id="KW-0865">Zymogen</keyword>
<accession>C5NZY5</accession>
<accession>Q3KRQ8</accession>
<evidence type="ECO:0000250" key="1"/>
<evidence type="ECO:0000255" key="2"/>
<evidence type="ECO:0000305" key="3"/>
<sequence>MRVSSSLIALAALAVQALALPVNELAERDTGLDVKLIPIGNTRVKAIITNNADHEMSFVKYNTLFDSSPVRKVQISKDGSIVPFNGMRLYYDINNLPKEAYKTLAPGASAEAEFDIAETSDLSAGGSFEISAEGSIPVIDGQGTKPTGSIRFKANVLTMDIDGEMASKVASAIPELDKRTRVDGQTCTGQYAQLLQGGLRNCVTYAQRAAQAASGGNAQKFQEYFKTTSQQARQSVARRFQAIAQECSSANQGRTIYFCQDIYRNCQRGLIAYTIPARSHVVNCPDYWRLPPVVNRGLDPDHGYVVVHEFTHATSIFSPGTVDHAYGYEQCRRLNAQQSLSNADNYSLFAADVTRN</sequence>
<organism>
    <name type="scientific">Coccidioides posadasii (strain C735)</name>
    <name type="common">Valley fever fungus</name>
    <dbReference type="NCBI Taxonomy" id="222929"/>
    <lineage>
        <taxon>Eukaryota</taxon>
        <taxon>Fungi</taxon>
        <taxon>Dikarya</taxon>
        <taxon>Ascomycota</taxon>
        <taxon>Pezizomycotina</taxon>
        <taxon>Eurotiomycetes</taxon>
        <taxon>Eurotiomycetidae</taxon>
        <taxon>Onygenales</taxon>
        <taxon>Onygenaceae</taxon>
        <taxon>Coccidioides</taxon>
    </lineage>
</organism>
<protein>
    <recommendedName>
        <fullName>Neutral protease 2 homolog MEP5</fullName>
        <ecNumber>3.4.24.39</ecNumber>
    </recommendedName>
    <alternativeName>
        <fullName>Deuterolysin MEP5</fullName>
    </alternativeName>
    <alternativeName>
        <fullName>Metalloproteinase 5</fullName>
    </alternativeName>
</protein>
<gene>
    <name type="primary">MEP5</name>
    <name type="ORF">CPC735_000180</name>
</gene>
<dbReference type="EC" id="3.4.24.39"/>
<dbReference type="EMBL" id="AY987809">
    <property type="protein sequence ID" value="AAY45755.1"/>
    <property type="status" value="ALT_SEQ"/>
    <property type="molecule type" value="Genomic_DNA"/>
</dbReference>
<dbReference type="EMBL" id="ACFW01000004">
    <property type="protein sequence ID" value="EER29762.1"/>
    <property type="status" value="ALT_SEQ"/>
    <property type="molecule type" value="Genomic_DNA"/>
</dbReference>
<dbReference type="RefSeq" id="XP_003071907.1">
    <property type="nucleotide sequence ID" value="XM_003071861.1"/>
</dbReference>
<dbReference type="SMR" id="C5NZY5"/>
<dbReference type="KEGG" id="cpw:9697412"/>
<dbReference type="HOGENOM" id="CLU_039313_1_1_1"/>
<dbReference type="OrthoDB" id="412874at2759"/>
<dbReference type="BRENDA" id="3.4.24.39">
    <property type="organism ID" value="9184"/>
</dbReference>
<dbReference type="Proteomes" id="UP000009084">
    <property type="component" value="Unassembled WGS sequence"/>
</dbReference>
<dbReference type="GO" id="GO:0005576">
    <property type="term" value="C:extracellular region"/>
    <property type="evidence" value="ECO:0007669"/>
    <property type="project" value="UniProtKB-SubCell"/>
</dbReference>
<dbReference type="GO" id="GO:0046872">
    <property type="term" value="F:metal ion binding"/>
    <property type="evidence" value="ECO:0007669"/>
    <property type="project" value="UniProtKB-KW"/>
</dbReference>
<dbReference type="GO" id="GO:0004222">
    <property type="term" value="F:metalloendopeptidase activity"/>
    <property type="evidence" value="ECO:0007669"/>
    <property type="project" value="InterPro"/>
</dbReference>
<dbReference type="GO" id="GO:0006508">
    <property type="term" value="P:proteolysis"/>
    <property type="evidence" value="ECO:0007669"/>
    <property type="project" value="UniProtKB-KW"/>
</dbReference>
<dbReference type="CDD" id="cd11008">
    <property type="entry name" value="M35_deuterolysin_like"/>
    <property type="match status" value="1"/>
</dbReference>
<dbReference type="Gene3D" id="2.60.40.2970">
    <property type="match status" value="1"/>
</dbReference>
<dbReference type="Gene3D" id="3.40.390.10">
    <property type="entry name" value="Collagenase (Catalytic Domain)"/>
    <property type="match status" value="1"/>
</dbReference>
<dbReference type="InterPro" id="IPR050414">
    <property type="entry name" value="Fungal_M35_metalloproteases"/>
</dbReference>
<dbReference type="InterPro" id="IPR029463">
    <property type="entry name" value="Lys_MEP"/>
</dbReference>
<dbReference type="InterPro" id="IPR024079">
    <property type="entry name" value="MetalloPept_cat_dom_sf"/>
</dbReference>
<dbReference type="InterPro" id="IPR001384">
    <property type="entry name" value="Peptidase_M35"/>
</dbReference>
<dbReference type="PANTHER" id="PTHR37016">
    <property type="match status" value="1"/>
</dbReference>
<dbReference type="PANTHER" id="PTHR37016:SF3">
    <property type="entry name" value="NEUTRAL PROTEASE 2-RELATED"/>
    <property type="match status" value="1"/>
</dbReference>
<dbReference type="Pfam" id="PF02102">
    <property type="entry name" value="Peptidase_M35"/>
    <property type="match status" value="1"/>
</dbReference>
<dbReference type="PRINTS" id="PR00768">
    <property type="entry name" value="DEUTEROLYSIN"/>
</dbReference>
<dbReference type="SMART" id="SM01351">
    <property type="entry name" value="Aspzincin_M35"/>
    <property type="match status" value="1"/>
</dbReference>
<dbReference type="SUPFAM" id="SSF55486">
    <property type="entry name" value="Metalloproteases ('zincins'), catalytic domain"/>
    <property type="match status" value="1"/>
</dbReference>
<reference key="1">
    <citation type="journal article" date="2005" name="Infect. Immun.">
        <title>A metalloproteinase of Coccidioides posadasii contributes to evasion of host detection.</title>
        <authorList>
            <person name="Hung C.Y."/>
            <person name="Seshan K.R."/>
            <person name="Yu J.J."/>
            <person name="Schaller R."/>
            <person name="Xue J."/>
            <person name="Basrur V."/>
            <person name="Gardner M.J."/>
            <person name="Cole G.T."/>
        </authorList>
    </citation>
    <scope>NUCLEOTIDE SEQUENCE [GENOMIC DNA]</scope>
    <source>
        <strain>C735</strain>
    </source>
</reference>
<reference key="2">
    <citation type="journal article" date="2009" name="Genome Res.">
        <title>Comparative genomic analyses of the human fungal pathogens Coccidioides and their relatives.</title>
        <authorList>
            <person name="Sharpton T.J."/>
            <person name="Stajich J.E."/>
            <person name="Rounsley S.D."/>
            <person name="Gardner M.J."/>
            <person name="Wortman J.R."/>
            <person name="Jordar V.S."/>
            <person name="Maiti R."/>
            <person name="Kodira C.D."/>
            <person name="Neafsey D.E."/>
            <person name="Zeng Q."/>
            <person name="Hung C.-Y."/>
            <person name="McMahan C."/>
            <person name="Muszewska A."/>
            <person name="Grynberg M."/>
            <person name="Mandel M.A."/>
            <person name="Kellner E.M."/>
            <person name="Barker B.M."/>
            <person name="Galgiani J.N."/>
            <person name="Orbach M.J."/>
            <person name="Kirkland T.N."/>
            <person name="Cole G.T."/>
            <person name="Henn M.R."/>
            <person name="Birren B.W."/>
            <person name="Taylor J.W."/>
        </authorList>
    </citation>
    <scope>NUCLEOTIDE SEQUENCE [LARGE SCALE GENOMIC DNA]</scope>
    <source>
        <strain>C735</strain>
    </source>
</reference>
<name>MEP5_COCP7</name>